<sequence>MAALGEPVRLERDICRAIELLEKLQRSGEVPPQKLQALQRVLQSEFCNAVREVYEHVYETVDISSSPEVRANATAKATVAAFAASEGHSHPRVVELPKTEEGLGFNIMGGKEQNSPIYISRIIPGGIADRHGGLKRGDQLLSVNGVSVEGEHHEKAVELLKAAQGKVKLVVRYTPKVLEEMESRFEKMRSAKRRQQT</sequence>
<comment type="function">
    <text evidence="7">Plays a role in establishing and maintaining the asymmetric distribution of channels and receptors at the plasma membrane of polarized cells. Forms membrane-associated multiprotein complexes that may regulate delivery and recycling of proteins to the correct membrane domains. The tripartite complex composed of LIN7 (LIN7A, LIN7B or LIN7C), CASK and APBA1 associates with the motor protein KIF17 to transport vesicles containing N-methyl-D-aspartate (NMDA) receptor subunit NR2B along microtubules (PubMed:10846156). This complex may have the potential to couple synaptic vesicle exocytosis to cell adhesion in brain. Ensures the proper localization of GRIN2B (subunit 2B of the NMDA receptor) to neuronal postsynaptic density and may function in localizing synaptic vesicles at synapses where it is recruited by beta-catenin and cadherin. Required to localize Kir2 channels, GABA transporter (SLC6A12) and EGFR/ERBB1, ERBB2, ERBB3 and ERBB4 to the basolateral membrane of epithelial cells.</text>
</comment>
<comment type="subunit">
    <text evidence="1 5 6 7 8 10 11">Forms a complex with CASK and CASKIN1 (By similarity). Component of the brain-specific heterotrimeric complex (LIN-10-LIN-2-LIN-7 complex) composed of at least APBA1, CASK, and LIN7, which associates with the motor protein KIF17 to transport vesicles along microtubules (PubMed:10846156). Can also interact with other modular proteins containing protein-protein interaction domains like PALS1, PALS2, MPP7, DLG1, DLG2 and DLG3 through its L27 domain. Interacts with DLG4 and GRIN2B as well as CDH1 and CTNNB1, the channels KCNJ12/Kir2.2, KCNJ4/Kir2.3 and probably KCNJ2/Kir2.1 and SLC6A12/BGT-1 via its PDZ domain. The association of LIN7A with cadherin and beta-catenin is calcium-dependent, occurs at synaptic junctions and requires the actin cytoskeleton. Interacts with EGFR, ERBB2, ERBB3 and ERBB4 with both PDZ and KID domains. Associates with KIF17 via APBA1. Interacts with HTR4. Forms a tripartite complex composed of DLG1, MPP7 and LIN7 (LIN7A or LIN7C) (By similarity). Interacts with MAPK12.</text>
</comment>
<comment type="interaction">
    <interactant intactId="EBI-821316">
        <id>O88952</id>
    </interactant>
    <interactant intactId="EBI-1633915">
        <id>Q08460</id>
        <label>Kcnma1</label>
    </interactant>
    <organismsDiffer>false</organismsDiffer>
    <experiments>4</experiments>
</comment>
<comment type="subcellular location">
    <subcellularLocation>
        <location>Cell membrane</location>
        <topology>Peripheral membrane protein</topology>
    </subcellularLocation>
    <subcellularLocation>
        <location>Basolateral cell membrane</location>
        <topology>Peripheral membrane protein</topology>
    </subcellularLocation>
    <subcellularLocation>
        <location>Cell junction</location>
    </subcellularLocation>
    <subcellularLocation>
        <location>Postsynaptic density membrane</location>
        <topology>Peripheral membrane protein</topology>
    </subcellularLocation>
    <subcellularLocation>
        <location>Cell junction</location>
        <location>Tight junction</location>
    </subcellularLocation>
    <text>Mainly basolateral in renal epithelial cells.</text>
</comment>
<comment type="tissue specificity">
    <text evidence="9">Expressed in the kidney; particularly in the outer medullary collecting duct.</text>
</comment>
<comment type="domain">
    <text evidence="1">The kinase interacting site is required for proper delivery of ERBB2 to the basolateral membrane.</text>
</comment>
<comment type="domain">
    <text evidence="1">The PDZ domain regulates endocytosis and recycling of the receptor at the membrane.</text>
</comment>
<comment type="domain">
    <text evidence="5">The L27 domain mediates interaction with CASK and is involved in the formation of multimeric complexes and the association of LIN7 to membranes.</text>
</comment>
<comment type="similarity">
    <text evidence="12">Belongs to the lin-7 family.</text>
</comment>
<evidence type="ECO:0000250" key="1"/>
<evidence type="ECO:0000250" key="2">
    <source>
        <dbReference type="UniProtKB" id="Q9NUP9"/>
    </source>
</evidence>
<evidence type="ECO:0000255" key="3">
    <source>
        <dbReference type="PROSITE-ProRule" id="PRU00143"/>
    </source>
</evidence>
<evidence type="ECO:0000255" key="4">
    <source>
        <dbReference type="PROSITE-ProRule" id="PRU00365"/>
    </source>
</evidence>
<evidence type="ECO:0000269" key="5">
    <source>
    </source>
</evidence>
<evidence type="ECO:0000269" key="6">
    <source>
    </source>
</evidence>
<evidence type="ECO:0000269" key="7">
    <source>
    </source>
</evidence>
<evidence type="ECO:0000269" key="8">
    <source>
    </source>
</evidence>
<evidence type="ECO:0000269" key="9">
    <source>
    </source>
</evidence>
<evidence type="ECO:0000269" key="10">
    <source>
    </source>
</evidence>
<evidence type="ECO:0000269" key="11">
    <source>
    </source>
</evidence>
<evidence type="ECO:0000305" key="12"/>
<name>LIN7C_MOUSE</name>
<reference key="1">
    <citation type="journal article" date="1998" name="Cell">
        <title>A tripartite protein complex with the potential to couple synaptic vesicle exocytosis to cell adhesion in brain.</title>
        <authorList>
            <person name="Butz S."/>
            <person name="Okamoto M."/>
            <person name="Suedhof T.C."/>
        </authorList>
    </citation>
    <scope>NUCLEOTIDE SEQUENCE [MRNA]</scope>
    <scope>INTERACTION WITH DLG2 AND DLG3</scope>
    <source>
        <tissue>Heart</tissue>
    </source>
</reference>
<reference key="2">
    <citation type="journal article" date="1999" name="J. Neurosci.">
        <title>Characterization of MALS/Velis-1, -2, and -3: a family of mammalian LIN-7 homologs enriched at brain synapses in association with the postsynaptic density-95/NMDA receptor postsynaptic complex.</title>
        <authorList>
            <person name="Jo K."/>
            <person name="Derin R."/>
            <person name="Li M."/>
            <person name="Bredt D.S."/>
        </authorList>
    </citation>
    <scope>NUCLEOTIDE SEQUENCE [MRNA]</scope>
</reference>
<reference key="3">
    <citation type="journal article" date="2005" name="Science">
        <title>The transcriptional landscape of the mammalian genome.</title>
        <authorList>
            <person name="Carninci P."/>
            <person name="Kasukawa T."/>
            <person name="Katayama S."/>
            <person name="Gough J."/>
            <person name="Frith M.C."/>
            <person name="Maeda N."/>
            <person name="Oyama R."/>
            <person name="Ravasi T."/>
            <person name="Lenhard B."/>
            <person name="Wells C."/>
            <person name="Kodzius R."/>
            <person name="Shimokawa K."/>
            <person name="Bajic V.B."/>
            <person name="Brenner S.E."/>
            <person name="Batalov S."/>
            <person name="Forrest A.R."/>
            <person name="Zavolan M."/>
            <person name="Davis M.J."/>
            <person name="Wilming L.G."/>
            <person name="Aidinis V."/>
            <person name="Allen J.E."/>
            <person name="Ambesi-Impiombato A."/>
            <person name="Apweiler R."/>
            <person name="Aturaliya R.N."/>
            <person name="Bailey T.L."/>
            <person name="Bansal M."/>
            <person name="Baxter L."/>
            <person name="Beisel K.W."/>
            <person name="Bersano T."/>
            <person name="Bono H."/>
            <person name="Chalk A.M."/>
            <person name="Chiu K.P."/>
            <person name="Choudhary V."/>
            <person name="Christoffels A."/>
            <person name="Clutterbuck D.R."/>
            <person name="Crowe M.L."/>
            <person name="Dalla E."/>
            <person name="Dalrymple B.P."/>
            <person name="de Bono B."/>
            <person name="Della Gatta G."/>
            <person name="di Bernardo D."/>
            <person name="Down T."/>
            <person name="Engstrom P."/>
            <person name="Fagiolini M."/>
            <person name="Faulkner G."/>
            <person name="Fletcher C.F."/>
            <person name="Fukushima T."/>
            <person name="Furuno M."/>
            <person name="Futaki S."/>
            <person name="Gariboldi M."/>
            <person name="Georgii-Hemming P."/>
            <person name="Gingeras T.R."/>
            <person name="Gojobori T."/>
            <person name="Green R.E."/>
            <person name="Gustincich S."/>
            <person name="Harbers M."/>
            <person name="Hayashi Y."/>
            <person name="Hensch T.K."/>
            <person name="Hirokawa N."/>
            <person name="Hill D."/>
            <person name="Huminiecki L."/>
            <person name="Iacono M."/>
            <person name="Ikeo K."/>
            <person name="Iwama A."/>
            <person name="Ishikawa T."/>
            <person name="Jakt M."/>
            <person name="Kanapin A."/>
            <person name="Katoh M."/>
            <person name="Kawasawa Y."/>
            <person name="Kelso J."/>
            <person name="Kitamura H."/>
            <person name="Kitano H."/>
            <person name="Kollias G."/>
            <person name="Krishnan S.P."/>
            <person name="Kruger A."/>
            <person name="Kummerfeld S.K."/>
            <person name="Kurochkin I.V."/>
            <person name="Lareau L.F."/>
            <person name="Lazarevic D."/>
            <person name="Lipovich L."/>
            <person name="Liu J."/>
            <person name="Liuni S."/>
            <person name="McWilliam S."/>
            <person name="Madan Babu M."/>
            <person name="Madera M."/>
            <person name="Marchionni L."/>
            <person name="Matsuda H."/>
            <person name="Matsuzawa S."/>
            <person name="Miki H."/>
            <person name="Mignone F."/>
            <person name="Miyake S."/>
            <person name="Morris K."/>
            <person name="Mottagui-Tabar S."/>
            <person name="Mulder N."/>
            <person name="Nakano N."/>
            <person name="Nakauchi H."/>
            <person name="Ng P."/>
            <person name="Nilsson R."/>
            <person name="Nishiguchi S."/>
            <person name="Nishikawa S."/>
            <person name="Nori F."/>
            <person name="Ohara O."/>
            <person name="Okazaki Y."/>
            <person name="Orlando V."/>
            <person name="Pang K.C."/>
            <person name="Pavan W.J."/>
            <person name="Pavesi G."/>
            <person name="Pesole G."/>
            <person name="Petrovsky N."/>
            <person name="Piazza S."/>
            <person name="Reed J."/>
            <person name="Reid J.F."/>
            <person name="Ring B.Z."/>
            <person name="Ringwald M."/>
            <person name="Rost B."/>
            <person name="Ruan Y."/>
            <person name="Salzberg S.L."/>
            <person name="Sandelin A."/>
            <person name="Schneider C."/>
            <person name="Schoenbach C."/>
            <person name="Sekiguchi K."/>
            <person name="Semple C.A."/>
            <person name="Seno S."/>
            <person name="Sessa L."/>
            <person name="Sheng Y."/>
            <person name="Shibata Y."/>
            <person name="Shimada H."/>
            <person name="Shimada K."/>
            <person name="Silva D."/>
            <person name="Sinclair B."/>
            <person name="Sperling S."/>
            <person name="Stupka E."/>
            <person name="Sugiura K."/>
            <person name="Sultana R."/>
            <person name="Takenaka Y."/>
            <person name="Taki K."/>
            <person name="Tammoja K."/>
            <person name="Tan S.L."/>
            <person name="Tang S."/>
            <person name="Taylor M.S."/>
            <person name="Tegner J."/>
            <person name="Teichmann S.A."/>
            <person name="Ueda H.R."/>
            <person name="van Nimwegen E."/>
            <person name="Verardo R."/>
            <person name="Wei C.L."/>
            <person name="Yagi K."/>
            <person name="Yamanishi H."/>
            <person name="Zabarovsky E."/>
            <person name="Zhu S."/>
            <person name="Zimmer A."/>
            <person name="Hide W."/>
            <person name="Bult C."/>
            <person name="Grimmond S.M."/>
            <person name="Teasdale R.D."/>
            <person name="Liu E.T."/>
            <person name="Brusic V."/>
            <person name="Quackenbush J."/>
            <person name="Wahlestedt C."/>
            <person name="Mattick J.S."/>
            <person name="Hume D.A."/>
            <person name="Kai C."/>
            <person name="Sasaki D."/>
            <person name="Tomaru Y."/>
            <person name="Fukuda S."/>
            <person name="Kanamori-Katayama M."/>
            <person name="Suzuki M."/>
            <person name="Aoki J."/>
            <person name="Arakawa T."/>
            <person name="Iida J."/>
            <person name="Imamura K."/>
            <person name="Itoh M."/>
            <person name="Kato T."/>
            <person name="Kawaji H."/>
            <person name="Kawagashira N."/>
            <person name="Kawashima T."/>
            <person name="Kojima M."/>
            <person name="Kondo S."/>
            <person name="Konno H."/>
            <person name="Nakano K."/>
            <person name="Ninomiya N."/>
            <person name="Nishio T."/>
            <person name="Okada M."/>
            <person name="Plessy C."/>
            <person name="Shibata K."/>
            <person name="Shiraki T."/>
            <person name="Suzuki S."/>
            <person name="Tagami M."/>
            <person name="Waki K."/>
            <person name="Watahiki A."/>
            <person name="Okamura-Oho Y."/>
            <person name="Suzuki H."/>
            <person name="Kawai J."/>
            <person name="Hayashizaki Y."/>
        </authorList>
    </citation>
    <scope>NUCLEOTIDE SEQUENCE [LARGE SCALE MRNA]</scope>
    <source>
        <strain>C57BL/6J</strain>
        <tissue>Cecum</tissue>
        <tissue>Testis</tissue>
    </source>
</reference>
<reference key="4">
    <citation type="journal article" date="2004" name="Genome Res.">
        <title>The status, quality, and expansion of the NIH full-length cDNA project: the Mammalian Gene Collection (MGC).</title>
        <authorList>
            <consortium name="The MGC Project Team"/>
        </authorList>
    </citation>
    <scope>NUCLEOTIDE SEQUENCE [LARGE SCALE MRNA]</scope>
    <source>
        <tissue>Eye</tissue>
    </source>
</reference>
<reference key="5">
    <citation type="submission" date="2007-04" db="UniProtKB">
        <authorList>
            <person name="Lubec G."/>
            <person name="Kang S.U."/>
        </authorList>
    </citation>
    <scope>PROTEIN SEQUENCE OF 169-184</scope>
    <scope>IDENTIFICATION BY MASS SPECTROMETRY</scope>
    <source>
        <strain>C57BL/6J</strain>
        <tissue>Brain</tissue>
    </source>
</reference>
<reference key="6">
    <citation type="journal article" date="2000" name="Am. J. Physiol.">
        <title>mLin-7 is localized to the basolateral surface of renal epithelia via its NH(2) terminus.</title>
        <authorList>
            <person name="Straight S.W."/>
            <person name="Karnak D."/>
            <person name="Borg J.-P."/>
            <person name="Kamberov E."/>
            <person name="Dare H."/>
            <person name="Margolis B."/>
            <person name="Wade J.B."/>
        </authorList>
    </citation>
    <scope>SUBCELLULAR LOCATION</scope>
    <scope>DOMAIN</scope>
    <scope>INTERACTION WITH SLC6A12</scope>
</reference>
<reference key="7">
    <citation type="journal article" date="2000" name="J. Biol. Chem.">
        <title>Molecular cloning and characterization of Pals, proteins associated with mLin-7.</title>
        <authorList>
            <person name="Kamberov E."/>
            <person name="Makarova O."/>
            <person name="Roh M."/>
            <person name="Liu A."/>
            <person name="Karnak D."/>
            <person name="Straight S."/>
            <person name="Margolis B."/>
        </authorList>
    </citation>
    <scope>INTERACTION WITH PALS1</scope>
</reference>
<reference key="8">
    <citation type="journal article" date="2000" name="Science">
        <title>Kinesin superfamily motor protein KIF17 and mLin-10 in NMDA receptor-containing vesicle transport.</title>
        <authorList>
            <person name="Setou M."/>
            <person name="Nakagawa T."/>
            <person name="Seog D.-H."/>
            <person name="Hirokawa N."/>
        </authorList>
    </citation>
    <scope>FUNCTION</scope>
    <scope>IDENTIFICATION IN COMPLEX WITH APBA1 AND CASK</scope>
</reference>
<reference key="9">
    <citation type="journal article" date="2004" name="J. Cell Sci.">
        <title>New sorting nexin (SNX27) and NHERF specifically interact with the 5-HT4a receptor splice variant: roles in receptor targeting.</title>
        <authorList>
            <person name="Joubert L."/>
            <person name="Hanson B."/>
            <person name="Barthet G."/>
            <person name="Sebben M."/>
            <person name="Claeysen S."/>
            <person name="Hong W."/>
            <person name="Marin P."/>
            <person name="Dumuis A."/>
            <person name="Bockaert J."/>
        </authorList>
    </citation>
    <scope>INTERACTION WITH HTR4</scope>
</reference>
<reference key="10">
    <citation type="journal article" date="2005" name="Am. J. Physiol.">
        <title>Differential localization of the Mammalian Lin 7 (MALS/Veli) PDZ proteins in the kidney.</title>
        <authorList>
            <person name="Olsen O."/>
            <person name="Wade J.B."/>
            <person name="Morin N."/>
            <person name="Bredt D.S."/>
            <person name="Welling P.A."/>
        </authorList>
    </citation>
    <scope>SUBCELLULAR LOCATION</scope>
    <scope>TISSUE SPECIFICITY</scope>
</reference>
<reference key="11">
    <citation type="journal article" date="2005" name="Biochim. Biophys. Acta">
        <title>Outer membrane protein 25-a mitochondrial anchor and inhibitor of stress-activated protein kinase-3.</title>
        <authorList>
            <person name="Court N.W."/>
            <person name="Ingley E."/>
            <person name="Klinken S.P."/>
            <person name="Bogoyevitch M.A."/>
        </authorList>
    </citation>
    <scope>INTERACTION WITH MAPK12</scope>
</reference>
<reference key="12">
    <citation type="journal article" date="2010" name="Cell">
        <title>A tissue-specific atlas of mouse protein phosphorylation and expression.</title>
        <authorList>
            <person name="Huttlin E.L."/>
            <person name="Jedrychowski M.P."/>
            <person name="Elias J.E."/>
            <person name="Goswami T."/>
            <person name="Rad R."/>
            <person name="Beausoleil S.A."/>
            <person name="Villen J."/>
            <person name="Haas W."/>
            <person name="Sowa M.E."/>
            <person name="Gygi S.P."/>
        </authorList>
    </citation>
    <scope>IDENTIFICATION BY MASS SPECTROMETRY [LARGE SCALE ANALYSIS]</scope>
    <source>
        <tissue>Brain</tissue>
        <tissue>Brown adipose tissue</tissue>
        <tissue>Heart</tissue>
        <tissue>Kidney</tissue>
        <tissue>Liver</tissue>
        <tissue>Lung</tissue>
        <tissue>Testis</tissue>
    </source>
</reference>
<organism>
    <name type="scientific">Mus musculus</name>
    <name type="common">Mouse</name>
    <dbReference type="NCBI Taxonomy" id="10090"/>
    <lineage>
        <taxon>Eukaryota</taxon>
        <taxon>Metazoa</taxon>
        <taxon>Chordata</taxon>
        <taxon>Craniata</taxon>
        <taxon>Vertebrata</taxon>
        <taxon>Euteleostomi</taxon>
        <taxon>Mammalia</taxon>
        <taxon>Eutheria</taxon>
        <taxon>Euarchontoglires</taxon>
        <taxon>Glires</taxon>
        <taxon>Rodentia</taxon>
        <taxon>Myomorpha</taxon>
        <taxon>Muroidea</taxon>
        <taxon>Muridae</taxon>
        <taxon>Murinae</taxon>
        <taxon>Mus</taxon>
        <taxon>Mus</taxon>
    </lineage>
</organism>
<keyword id="KW-0007">Acetylation</keyword>
<keyword id="KW-0965">Cell junction</keyword>
<keyword id="KW-1003">Cell membrane</keyword>
<keyword id="KW-0903">Direct protein sequencing</keyword>
<keyword id="KW-0268">Exocytosis</keyword>
<keyword id="KW-0472">Membrane</keyword>
<keyword id="KW-0628">Postsynaptic cell membrane</keyword>
<keyword id="KW-0653">Protein transport</keyword>
<keyword id="KW-1185">Reference proteome</keyword>
<keyword id="KW-0770">Synapse</keyword>
<keyword id="KW-0796">Tight junction</keyword>
<keyword id="KW-0813">Transport</keyword>
<proteinExistence type="evidence at protein level"/>
<gene>
    <name type="primary">Lin7c</name>
    <name type="synonym">Mals3</name>
    <name type="synonym">Veli3</name>
</gene>
<feature type="initiator methionine" description="Removed" evidence="2">
    <location>
        <position position="1"/>
    </location>
</feature>
<feature type="chain" id="PRO_0000189630" description="Protein lin-7 homolog C">
    <location>
        <begin position="2"/>
        <end position="197"/>
    </location>
</feature>
<feature type="domain" description="L27" evidence="4">
    <location>
        <begin position="10"/>
        <end position="65"/>
    </location>
</feature>
<feature type="domain" description="PDZ" evidence="3">
    <location>
        <begin position="93"/>
        <end position="175"/>
    </location>
</feature>
<feature type="short sequence motif" description="Kinase interacting site" evidence="1">
    <location>
        <begin position="2"/>
        <end position="13"/>
    </location>
</feature>
<feature type="modified residue" description="N-acetylalanine" evidence="2">
    <location>
        <position position="2"/>
    </location>
</feature>
<dbReference type="EMBL" id="AF087695">
    <property type="protein sequence ID" value="AAC78483.1"/>
    <property type="molecule type" value="mRNA"/>
</dbReference>
<dbReference type="EMBL" id="AF173083">
    <property type="protein sequence ID" value="AAD48502.1"/>
    <property type="molecule type" value="mRNA"/>
</dbReference>
<dbReference type="EMBL" id="AK015399">
    <property type="protein sequence ID" value="BAB29830.1"/>
    <property type="molecule type" value="mRNA"/>
</dbReference>
<dbReference type="EMBL" id="AK078923">
    <property type="protein sequence ID" value="BAC37462.1"/>
    <property type="molecule type" value="mRNA"/>
</dbReference>
<dbReference type="EMBL" id="BC046966">
    <property type="protein sequence ID" value="AAH46966.1"/>
    <property type="molecule type" value="mRNA"/>
</dbReference>
<dbReference type="CCDS" id="CCDS16509.1"/>
<dbReference type="RefSeq" id="NP_035829.1">
    <property type="nucleotide sequence ID" value="NM_011699.4"/>
</dbReference>
<dbReference type="SMR" id="O88952"/>
<dbReference type="BioGRID" id="204516">
    <property type="interactions" value="51"/>
</dbReference>
<dbReference type="ComplexPortal" id="CPX-7742">
    <property type="entry name" value="LIN-10-LIN-2-LIN-7 complex, LIN7C variant"/>
</dbReference>
<dbReference type="CORUM" id="O88952"/>
<dbReference type="FunCoup" id="O88952">
    <property type="interactions" value="2007"/>
</dbReference>
<dbReference type="IntAct" id="O88952">
    <property type="interactions" value="25"/>
</dbReference>
<dbReference type="STRING" id="10090.ENSMUSP00000028583"/>
<dbReference type="iPTMnet" id="O88952"/>
<dbReference type="PhosphoSitePlus" id="O88952"/>
<dbReference type="SwissPalm" id="O88952"/>
<dbReference type="jPOST" id="O88952"/>
<dbReference type="PaxDb" id="10090-ENSMUSP00000028583"/>
<dbReference type="PeptideAtlas" id="O88952"/>
<dbReference type="ProteomicsDB" id="252477"/>
<dbReference type="Pumba" id="O88952"/>
<dbReference type="Antibodypedia" id="25423">
    <property type="antibodies" value="142 antibodies from 28 providers"/>
</dbReference>
<dbReference type="DNASU" id="22343"/>
<dbReference type="Ensembl" id="ENSMUST00000028583.8">
    <property type="protein sequence ID" value="ENSMUSP00000028583.8"/>
    <property type="gene ID" value="ENSMUSG00000027162.8"/>
</dbReference>
<dbReference type="GeneID" id="22343"/>
<dbReference type="KEGG" id="mmu:22343"/>
<dbReference type="UCSC" id="uc008lmo.1">
    <property type="organism name" value="mouse"/>
</dbReference>
<dbReference type="AGR" id="MGI:1330839"/>
<dbReference type="CTD" id="55327"/>
<dbReference type="MGI" id="MGI:1330839">
    <property type="gene designation" value="Lin7c"/>
</dbReference>
<dbReference type="VEuPathDB" id="HostDB:ENSMUSG00000027162"/>
<dbReference type="eggNOG" id="KOG3550">
    <property type="taxonomic scope" value="Eukaryota"/>
</dbReference>
<dbReference type="GeneTree" id="ENSGT00940000153222"/>
<dbReference type="HOGENOM" id="CLU_097962_0_0_1"/>
<dbReference type="InParanoid" id="O88952"/>
<dbReference type="OMA" id="RFDKQRM"/>
<dbReference type="OrthoDB" id="10056216at2759"/>
<dbReference type="PhylomeDB" id="O88952"/>
<dbReference type="TreeFam" id="TF316850"/>
<dbReference type="Reactome" id="R-MMU-212676">
    <property type="pathway name" value="Dopamine Neurotransmitter Release Cycle"/>
</dbReference>
<dbReference type="BioGRID-ORCS" id="22343">
    <property type="hits" value="3 hits in 77 CRISPR screens"/>
</dbReference>
<dbReference type="CD-CODE" id="CE726F99">
    <property type="entry name" value="Postsynaptic density"/>
</dbReference>
<dbReference type="ChiTaRS" id="Lin7c">
    <property type="organism name" value="mouse"/>
</dbReference>
<dbReference type="PRO" id="PR:O88952"/>
<dbReference type="Proteomes" id="UP000000589">
    <property type="component" value="Chromosome 2"/>
</dbReference>
<dbReference type="RNAct" id="O88952">
    <property type="molecule type" value="protein"/>
</dbReference>
<dbReference type="Bgee" id="ENSMUSG00000027162">
    <property type="expression patterns" value="Expressed in olfactory epithelium and 255 other cell types or tissues"/>
</dbReference>
<dbReference type="GO" id="GO:0016323">
    <property type="term" value="C:basolateral plasma membrane"/>
    <property type="evidence" value="ECO:0007669"/>
    <property type="project" value="UniProtKB-SubCell"/>
</dbReference>
<dbReference type="GO" id="GO:0005923">
    <property type="term" value="C:bicellular tight junction"/>
    <property type="evidence" value="ECO:0007669"/>
    <property type="project" value="UniProtKB-SubCell"/>
</dbReference>
<dbReference type="GO" id="GO:0098978">
    <property type="term" value="C:glutamatergic synapse"/>
    <property type="evidence" value="ECO:0000314"/>
    <property type="project" value="SynGO"/>
</dbReference>
<dbReference type="GO" id="GO:0097025">
    <property type="term" value="C:MPP7-DLG1-LIN7 complex"/>
    <property type="evidence" value="ECO:0007669"/>
    <property type="project" value="Ensembl"/>
</dbReference>
<dbReference type="GO" id="GO:0098839">
    <property type="term" value="C:postsynaptic density membrane"/>
    <property type="evidence" value="ECO:0007669"/>
    <property type="project" value="UniProtKB-SubCell"/>
</dbReference>
<dbReference type="GO" id="GO:0098793">
    <property type="term" value="C:presynapse"/>
    <property type="evidence" value="ECO:0007669"/>
    <property type="project" value="GOC"/>
</dbReference>
<dbReference type="GO" id="GO:0045202">
    <property type="term" value="C:synapse"/>
    <property type="evidence" value="ECO:0000314"/>
    <property type="project" value="MGI"/>
</dbReference>
<dbReference type="GO" id="GO:0030658">
    <property type="term" value="C:transport vesicle membrane"/>
    <property type="evidence" value="ECO:0000304"/>
    <property type="project" value="Reactome"/>
</dbReference>
<dbReference type="GO" id="GO:0008092">
    <property type="term" value="F:cytoskeletal protein binding"/>
    <property type="evidence" value="ECO:0007669"/>
    <property type="project" value="Ensembl"/>
</dbReference>
<dbReference type="GO" id="GO:0097016">
    <property type="term" value="F:L27 domain binding"/>
    <property type="evidence" value="ECO:0007669"/>
    <property type="project" value="Ensembl"/>
</dbReference>
<dbReference type="GO" id="GO:0030165">
    <property type="term" value="F:PDZ domain binding"/>
    <property type="evidence" value="ECO:0007669"/>
    <property type="project" value="Ensembl"/>
</dbReference>
<dbReference type="GO" id="GO:0006887">
    <property type="term" value="P:exocytosis"/>
    <property type="evidence" value="ECO:0007669"/>
    <property type="project" value="UniProtKB-KW"/>
</dbReference>
<dbReference type="GO" id="GO:0002011">
    <property type="term" value="P:morphogenesis of an epithelial sheet"/>
    <property type="evidence" value="ECO:0007669"/>
    <property type="project" value="Ensembl"/>
</dbReference>
<dbReference type="GO" id="GO:0007269">
    <property type="term" value="P:neurotransmitter secretion"/>
    <property type="evidence" value="ECO:0000316"/>
    <property type="project" value="MGI"/>
</dbReference>
<dbReference type="GO" id="GO:0015031">
    <property type="term" value="P:protein transport"/>
    <property type="evidence" value="ECO:0007669"/>
    <property type="project" value="UniProtKB-KW"/>
</dbReference>
<dbReference type="CDD" id="cd06796">
    <property type="entry name" value="PDZ_Lin-7-like"/>
    <property type="match status" value="1"/>
</dbReference>
<dbReference type="FunFam" id="2.30.42.10:FF:000076">
    <property type="entry name" value="Protein lin-7 homolog"/>
    <property type="match status" value="1"/>
</dbReference>
<dbReference type="Gene3D" id="2.30.42.10">
    <property type="match status" value="1"/>
</dbReference>
<dbReference type="Gene3D" id="1.10.287.650">
    <property type="entry name" value="L27 domain"/>
    <property type="match status" value="1"/>
</dbReference>
<dbReference type="InterPro" id="IPR014775">
    <property type="entry name" value="L27_C"/>
</dbReference>
<dbReference type="InterPro" id="IPR004172">
    <property type="entry name" value="L27_dom"/>
</dbReference>
<dbReference type="InterPro" id="IPR036892">
    <property type="entry name" value="L27_dom_sf"/>
</dbReference>
<dbReference type="InterPro" id="IPR017365">
    <property type="entry name" value="LIN7"/>
</dbReference>
<dbReference type="InterPro" id="IPR051109">
    <property type="entry name" value="MAM_complex_regulator"/>
</dbReference>
<dbReference type="InterPro" id="IPR001478">
    <property type="entry name" value="PDZ"/>
</dbReference>
<dbReference type="InterPro" id="IPR036034">
    <property type="entry name" value="PDZ_sf"/>
</dbReference>
<dbReference type="PANTHER" id="PTHR14063">
    <property type="entry name" value="PROTEIN LIN-7 HOMOLOG"/>
    <property type="match status" value="1"/>
</dbReference>
<dbReference type="Pfam" id="PF02828">
    <property type="entry name" value="L27"/>
    <property type="match status" value="1"/>
</dbReference>
<dbReference type="Pfam" id="PF00595">
    <property type="entry name" value="PDZ"/>
    <property type="match status" value="1"/>
</dbReference>
<dbReference type="PIRSF" id="PIRSF038039">
    <property type="entry name" value="Lin-7_homologue"/>
    <property type="match status" value="1"/>
</dbReference>
<dbReference type="SMART" id="SM00569">
    <property type="entry name" value="L27"/>
    <property type="match status" value="1"/>
</dbReference>
<dbReference type="SMART" id="SM00228">
    <property type="entry name" value="PDZ"/>
    <property type="match status" value="1"/>
</dbReference>
<dbReference type="SUPFAM" id="SSF101288">
    <property type="entry name" value="L27 domain"/>
    <property type="match status" value="1"/>
</dbReference>
<dbReference type="SUPFAM" id="SSF50156">
    <property type="entry name" value="PDZ domain-like"/>
    <property type="match status" value="1"/>
</dbReference>
<dbReference type="PROSITE" id="PS51022">
    <property type="entry name" value="L27"/>
    <property type="match status" value="1"/>
</dbReference>
<dbReference type="PROSITE" id="PS50106">
    <property type="entry name" value="PDZ"/>
    <property type="match status" value="1"/>
</dbReference>
<protein>
    <recommendedName>
        <fullName>Protein lin-7 homolog C</fullName>
        <shortName>Lin-7C</shortName>
        <shortName>mLin7C</shortName>
    </recommendedName>
    <alternativeName>
        <fullName>Mammalian lin-seven protein 3</fullName>
        <shortName>MALS-3</shortName>
    </alternativeName>
    <alternativeName>
        <fullName>Vertebrate lin-7 homolog 3</fullName>
        <shortName>Veli-3</shortName>
    </alternativeName>
</protein>
<accession>O88952</accession>